<keyword id="KW-0927">Auxin signaling pathway</keyword>
<keyword id="KW-1185">Reference proteome</keyword>
<dbReference type="EMBL" id="S44172">
    <property type="protein sequence ID" value="AAB23279.1"/>
    <property type="molecule type" value="Genomic_DNA"/>
</dbReference>
<dbReference type="PIR" id="JQ1096">
    <property type="entry name" value="JQ1096"/>
</dbReference>
<dbReference type="RefSeq" id="NP_001341736.1">
    <property type="nucleotide sequence ID" value="NM_001354807.1"/>
</dbReference>
<dbReference type="RefSeq" id="XP_006606999.2">
    <property type="nucleotide sequence ID" value="XM_006606936.2"/>
</dbReference>
<dbReference type="PaxDb" id="3847-GLYMA06G43420.2"/>
<dbReference type="EnsemblPlants" id="KRG88478">
    <property type="protein sequence ID" value="KRG88478"/>
    <property type="gene ID" value="GLYMA_U036300"/>
</dbReference>
<dbReference type="EnsemblPlants" id="KRH55796">
    <property type="protein sequence ID" value="KRH55796"/>
    <property type="gene ID" value="GLYMA_06G282600"/>
</dbReference>
<dbReference type="GeneID" id="100787768"/>
<dbReference type="Gramene" id="KRG88478">
    <property type="protein sequence ID" value="KRG88478"/>
    <property type="gene ID" value="GLYMA_U036300"/>
</dbReference>
<dbReference type="Gramene" id="KRH55796">
    <property type="protein sequence ID" value="KRH55796"/>
    <property type="gene ID" value="GLYMA_06G282600"/>
</dbReference>
<dbReference type="HOGENOM" id="CLU_098106_3_1_1"/>
<dbReference type="InParanoid" id="P33081"/>
<dbReference type="OMA" id="NHALFQD"/>
<dbReference type="OrthoDB" id="625231at2759"/>
<dbReference type="Proteomes" id="UP000008827">
    <property type="component" value="Chromosome 6"/>
</dbReference>
<dbReference type="Proteomes" id="UP000008827">
    <property type="component" value="Unassembled WGS sequence"/>
</dbReference>
<dbReference type="GO" id="GO:0009734">
    <property type="term" value="P:auxin-activated signaling pathway"/>
    <property type="evidence" value="ECO:0007669"/>
    <property type="project" value="UniProtKB-KW"/>
</dbReference>
<dbReference type="InterPro" id="IPR003676">
    <property type="entry name" value="SAUR_fam"/>
</dbReference>
<dbReference type="PANTHER" id="PTHR31929">
    <property type="entry name" value="SAUR-LIKE AUXIN-RESPONSIVE PROTEIN FAMILY-RELATED"/>
    <property type="match status" value="1"/>
</dbReference>
<dbReference type="Pfam" id="PF02519">
    <property type="entry name" value="Auxin_inducible"/>
    <property type="match status" value="1"/>
</dbReference>
<protein>
    <recommendedName>
        <fullName>Auxin-induced protein 15A</fullName>
    </recommendedName>
</protein>
<name>AX15A_SOYBN</name>
<comment type="induction">
    <text>By auxin.</text>
</comment>
<comment type="similarity">
    <text evidence="1">Belongs to the ARG7 family.</text>
</comment>
<evidence type="ECO:0000305" key="1"/>
<accession>P33081</accession>
<organism>
    <name type="scientific">Glycine max</name>
    <name type="common">Soybean</name>
    <name type="synonym">Glycine hispida</name>
    <dbReference type="NCBI Taxonomy" id="3847"/>
    <lineage>
        <taxon>Eukaryota</taxon>
        <taxon>Viridiplantae</taxon>
        <taxon>Streptophyta</taxon>
        <taxon>Embryophyta</taxon>
        <taxon>Tracheophyta</taxon>
        <taxon>Spermatophyta</taxon>
        <taxon>Magnoliopsida</taxon>
        <taxon>eudicotyledons</taxon>
        <taxon>Gunneridae</taxon>
        <taxon>Pentapetalae</taxon>
        <taxon>rosids</taxon>
        <taxon>fabids</taxon>
        <taxon>Fabales</taxon>
        <taxon>Fabaceae</taxon>
        <taxon>Papilionoideae</taxon>
        <taxon>50 kb inversion clade</taxon>
        <taxon>NPAAA clade</taxon>
        <taxon>indigoferoid/millettioid clade</taxon>
        <taxon>Phaseoleae</taxon>
        <taxon>Glycine</taxon>
        <taxon>Glycine subgen. Soja</taxon>
    </lineage>
</organism>
<reference key="1">
    <citation type="journal article" date="1989" name="Plant Cell">
        <title>Transcription, organization, and sequence of an auxin-regulated gene cluster in soybean.</title>
        <authorList>
            <person name="McClure B.A."/>
            <person name="Hagen G."/>
            <person name="Brown C.S."/>
            <person name="Gee M.A."/>
            <person name="Guilfoyle T.J."/>
        </authorList>
    </citation>
    <scope>NUCLEOTIDE SEQUENCE [GENOMIC DNA]</scope>
    <source>
        <strain>cv. Wayne</strain>
    </source>
</reference>
<feature type="chain" id="PRO_0000064778" description="Auxin-induced protein 15A">
    <location>
        <begin position="1"/>
        <end position="82"/>
    </location>
</feature>
<proteinExistence type="evidence at transcript level"/>
<sequence length="82" mass="9058">MGFRLPGIRKASKAADAPKGYLAVYVGEKLKRFVIPVSYLNQPSFQDLLSQAEEEFGYDHPMGGLTIPCSEDVFQCITSCLN</sequence>